<protein>
    <recommendedName>
        <fullName>Probable protein phosphatase 2C 44</fullName>
        <shortName>OsPP2C44</shortName>
        <ecNumber>3.1.3.16</ecNumber>
    </recommendedName>
</protein>
<accession>Q0JAA0</accession>
<accession>B9FCE8</accession>
<accession>Q7XPM4</accession>
<feature type="chain" id="PRO_0000363291" description="Probable protein phosphatase 2C 44">
    <location>
        <begin position="1"/>
        <end position="321"/>
    </location>
</feature>
<feature type="domain" description="PPM-type phosphatase" evidence="2">
    <location>
        <begin position="70"/>
        <end position="319"/>
    </location>
</feature>
<feature type="region of interest" description="Disordered" evidence="3">
    <location>
        <begin position="1"/>
        <end position="36"/>
    </location>
</feature>
<feature type="region of interest" description="Disordered" evidence="3">
    <location>
        <begin position="51"/>
        <end position="70"/>
    </location>
</feature>
<feature type="compositionally biased region" description="Low complexity" evidence="3">
    <location>
        <begin position="9"/>
        <end position="31"/>
    </location>
</feature>
<feature type="compositionally biased region" description="Polar residues" evidence="3">
    <location>
        <begin position="51"/>
        <end position="69"/>
    </location>
</feature>
<feature type="binding site" evidence="1">
    <location>
        <position position="107"/>
    </location>
    <ligand>
        <name>Mn(2+)</name>
        <dbReference type="ChEBI" id="CHEBI:29035"/>
        <label>1</label>
    </ligand>
</feature>
<feature type="binding site" evidence="1">
    <location>
        <position position="107"/>
    </location>
    <ligand>
        <name>Mn(2+)</name>
        <dbReference type="ChEBI" id="CHEBI:29035"/>
        <label>2</label>
    </ligand>
</feature>
<feature type="binding site" evidence="1">
    <location>
        <position position="108"/>
    </location>
    <ligand>
        <name>Mn(2+)</name>
        <dbReference type="ChEBI" id="CHEBI:29035"/>
        <label>1</label>
    </ligand>
</feature>
<feature type="binding site" evidence="1">
    <location>
        <position position="271"/>
    </location>
    <ligand>
        <name>Mn(2+)</name>
        <dbReference type="ChEBI" id="CHEBI:29035"/>
        <label>2</label>
    </ligand>
</feature>
<feature type="binding site" evidence="1">
    <location>
        <position position="310"/>
    </location>
    <ligand>
        <name>Mn(2+)</name>
        <dbReference type="ChEBI" id="CHEBI:29035"/>
        <label>2</label>
    </ligand>
</feature>
<feature type="sequence conflict" description="In Ref. 6; AK070129." evidence="4" ref="6">
    <original>N</original>
    <variation>D</variation>
    <location>
        <position position="51"/>
    </location>
</feature>
<feature type="sequence conflict" description="In Ref. 6; AK070129." evidence="4" ref="6">
    <original>N</original>
    <variation>S</variation>
    <location>
        <position position="260"/>
    </location>
</feature>
<organism>
    <name type="scientific">Oryza sativa subsp. japonica</name>
    <name type="common">Rice</name>
    <dbReference type="NCBI Taxonomy" id="39947"/>
    <lineage>
        <taxon>Eukaryota</taxon>
        <taxon>Viridiplantae</taxon>
        <taxon>Streptophyta</taxon>
        <taxon>Embryophyta</taxon>
        <taxon>Tracheophyta</taxon>
        <taxon>Spermatophyta</taxon>
        <taxon>Magnoliopsida</taxon>
        <taxon>Liliopsida</taxon>
        <taxon>Poales</taxon>
        <taxon>Poaceae</taxon>
        <taxon>BOP clade</taxon>
        <taxon>Oryzoideae</taxon>
        <taxon>Oryzeae</taxon>
        <taxon>Oryzinae</taxon>
        <taxon>Oryza</taxon>
        <taxon>Oryza sativa</taxon>
    </lineage>
</organism>
<sequence length="321" mass="34773">MVGRMERQSASSSASCSPSSSAAGTSSSSSACGGKKRPDILNMIRSATCLNSSSTDTGKGRSKQSSNKVTHGFHLVEGKSGHDMEDYHVAEYKYDKSHELGLFAIFDGHLGDSVPSYLKANLFCNILKEPIFWTNPQEAIKNAYRSTNKYILENAKQLGPGGSTAVTAIVVDGKDMWVANVGDSRAVVCERGAANQLTVDHEPHTTNERQRIEKQGGFVTTFPGDVPRVNGQLAVARAFGDQSLKAHLSSEPDVRHVPINSSIEFVILASDGLWKVMKNQEAVDLVKSIKDPQAAAKRLTTEALARKSKDDISCIVIRFRC</sequence>
<name>P2C44_ORYSJ</name>
<comment type="catalytic activity">
    <reaction>
        <text>O-phospho-L-seryl-[protein] + H2O = L-seryl-[protein] + phosphate</text>
        <dbReference type="Rhea" id="RHEA:20629"/>
        <dbReference type="Rhea" id="RHEA-COMP:9863"/>
        <dbReference type="Rhea" id="RHEA-COMP:11604"/>
        <dbReference type="ChEBI" id="CHEBI:15377"/>
        <dbReference type="ChEBI" id="CHEBI:29999"/>
        <dbReference type="ChEBI" id="CHEBI:43474"/>
        <dbReference type="ChEBI" id="CHEBI:83421"/>
        <dbReference type="EC" id="3.1.3.16"/>
    </reaction>
</comment>
<comment type="catalytic activity">
    <reaction>
        <text>O-phospho-L-threonyl-[protein] + H2O = L-threonyl-[protein] + phosphate</text>
        <dbReference type="Rhea" id="RHEA:47004"/>
        <dbReference type="Rhea" id="RHEA-COMP:11060"/>
        <dbReference type="Rhea" id="RHEA-COMP:11605"/>
        <dbReference type="ChEBI" id="CHEBI:15377"/>
        <dbReference type="ChEBI" id="CHEBI:30013"/>
        <dbReference type="ChEBI" id="CHEBI:43474"/>
        <dbReference type="ChEBI" id="CHEBI:61977"/>
        <dbReference type="EC" id="3.1.3.16"/>
    </reaction>
</comment>
<comment type="cofactor">
    <cofactor evidence="1">
        <name>Mg(2+)</name>
        <dbReference type="ChEBI" id="CHEBI:18420"/>
    </cofactor>
    <cofactor evidence="1">
        <name>Mn(2+)</name>
        <dbReference type="ChEBI" id="CHEBI:29035"/>
    </cofactor>
    <text evidence="1">Binds 2 magnesium or manganese ions per subunit.</text>
</comment>
<comment type="similarity">
    <text evidence="4">Belongs to the PP2C family.</text>
</comment>
<comment type="sequence caution" evidence="4">
    <conflict type="erroneous gene model prediction">
        <sequence resource="EMBL-CDS" id="CAE03557"/>
    </conflict>
</comment>
<proteinExistence type="evidence at transcript level"/>
<dbReference type="EC" id="3.1.3.16"/>
<dbReference type="EMBL" id="AL606684">
    <property type="protein sequence ID" value="CAE03557.1"/>
    <property type="status" value="ALT_SEQ"/>
    <property type="molecule type" value="Genomic_DNA"/>
</dbReference>
<dbReference type="EMBL" id="AP008210">
    <property type="protein sequence ID" value="BAF15737.1"/>
    <property type="molecule type" value="Genomic_DNA"/>
</dbReference>
<dbReference type="EMBL" id="AP014960">
    <property type="protein sequence ID" value="BAS90937.1"/>
    <property type="molecule type" value="Genomic_DNA"/>
</dbReference>
<dbReference type="EMBL" id="CM000141">
    <property type="protein sequence ID" value="EEE61653.1"/>
    <property type="molecule type" value="Genomic_DNA"/>
</dbReference>
<dbReference type="EMBL" id="AK070129">
    <property type="status" value="NOT_ANNOTATED_CDS"/>
    <property type="molecule type" value="mRNA"/>
</dbReference>
<dbReference type="RefSeq" id="XP_015636954.1">
    <property type="nucleotide sequence ID" value="XM_015781468.1"/>
</dbReference>
<dbReference type="SMR" id="Q0JAA0"/>
<dbReference type="FunCoup" id="Q0JAA0">
    <property type="interactions" value="26"/>
</dbReference>
<dbReference type="STRING" id="39947.Q0JAA0"/>
<dbReference type="PaxDb" id="39947-Q0JAA0"/>
<dbReference type="EnsemblPlants" id="Os04t0609600-01">
    <property type="protein sequence ID" value="Os04t0609600-01"/>
    <property type="gene ID" value="Os04g0609600"/>
</dbReference>
<dbReference type="Gramene" id="Os04t0609600-01">
    <property type="protein sequence ID" value="Os04t0609600-01"/>
    <property type="gene ID" value="Os04g0609600"/>
</dbReference>
<dbReference type="KEGG" id="dosa:Os04g0609600"/>
<dbReference type="eggNOG" id="KOG0698">
    <property type="taxonomic scope" value="Eukaryota"/>
</dbReference>
<dbReference type="HOGENOM" id="CLU_013173_0_1_1"/>
<dbReference type="InParanoid" id="Q0JAA0"/>
<dbReference type="OMA" id="IKNATCL"/>
<dbReference type="OrthoDB" id="10264738at2759"/>
<dbReference type="Proteomes" id="UP000000763">
    <property type="component" value="Chromosome 4"/>
</dbReference>
<dbReference type="Proteomes" id="UP000007752">
    <property type="component" value="Chromosome 4"/>
</dbReference>
<dbReference type="Proteomes" id="UP000059680">
    <property type="component" value="Chromosome 4"/>
</dbReference>
<dbReference type="GO" id="GO:0046872">
    <property type="term" value="F:metal ion binding"/>
    <property type="evidence" value="ECO:0007669"/>
    <property type="project" value="UniProtKB-KW"/>
</dbReference>
<dbReference type="GO" id="GO:0004722">
    <property type="term" value="F:protein serine/threonine phosphatase activity"/>
    <property type="evidence" value="ECO:0007669"/>
    <property type="project" value="UniProtKB-EC"/>
</dbReference>
<dbReference type="GO" id="GO:0007165">
    <property type="term" value="P:signal transduction"/>
    <property type="evidence" value="ECO:0000318"/>
    <property type="project" value="GO_Central"/>
</dbReference>
<dbReference type="CDD" id="cd00143">
    <property type="entry name" value="PP2Cc"/>
    <property type="match status" value="1"/>
</dbReference>
<dbReference type="FunFam" id="3.60.40.10:FF:000010">
    <property type="entry name" value="Probable protein phosphatase 2C 39"/>
    <property type="match status" value="1"/>
</dbReference>
<dbReference type="Gene3D" id="3.60.40.10">
    <property type="entry name" value="PPM-type phosphatase domain"/>
    <property type="match status" value="1"/>
</dbReference>
<dbReference type="InterPro" id="IPR015655">
    <property type="entry name" value="PP2C"/>
</dbReference>
<dbReference type="InterPro" id="IPR036457">
    <property type="entry name" value="PPM-type-like_dom_sf"/>
</dbReference>
<dbReference type="InterPro" id="IPR001932">
    <property type="entry name" value="PPM-type_phosphatase-like_dom"/>
</dbReference>
<dbReference type="PANTHER" id="PTHR47992">
    <property type="entry name" value="PROTEIN PHOSPHATASE"/>
    <property type="match status" value="1"/>
</dbReference>
<dbReference type="Pfam" id="PF00481">
    <property type="entry name" value="PP2C"/>
    <property type="match status" value="1"/>
</dbReference>
<dbReference type="SMART" id="SM00332">
    <property type="entry name" value="PP2Cc"/>
    <property type="match status" value="1"/>
</dbReference>
<dbReference type="SUPFAM" id="SSF81606">
    <property type="entry name" value="PP2C-like"/>
    <property type="match status" value="1"/>
</dbReference>
<dbReference type="PROSITE" id="PS51746">
    <property type="entry name" value="PPM_2"/>
    <property type="match status" value="1"/>
</dbReference>
<gene>
    <name type="ordered locus">Os04g0609600</name>
    <name type="ordered locus">LOC_Os04g52000</name>
    <name evidence="5" type="ORF">OsJ_16105</name>
    <name type="ORF">OSJNBa0085I10.2</name>
</gene>
<evidence type="ECO:0000250" key="1"/>
<evidence type="ECO:0000255" key="2">
    <source>
        <dbReference type="PROSITE-ProRule" id="PRU01082"/>
    </source>
</evidence>
<evidence type="ECO:0000256" key="3">
    <source>
        <dbReference type="SAM" id="MobiDB-lite"/>
    </source>
</evidence>
<evidence type="ECO:0000305" key="4"/>
<evidence type="ECO:0000312" key="5">
    <source>
        <dbReference type="EMBL" id="EEE61653.1"/>
    </source>
</evidence>
<keyword id="KW-0378">Hydrolase</keyword>
<keyword id="KW-0460">Magnesium</keyword>
<keyword id="KW-0464">Manganese</keyword>
<keyword id="KW-0479">Metal-binding</keyword>
<keyword id="KW-0904">Protein phosphatase</keyword>
<keyword id="KW-1185">Reference proteome</keyword>
<reference key="1">
    <citation type="journal article" date="2002" name="Nature">
        <title>Sequence and analysis of rice chromosome 4.</title>
        <authorList>
            <person name="Feng Q."/>
            <person name="Zhang Y."/>
            <person name="Hao P."/>
            <person name="Wang S."/>
            <person name="Fu G."/>
            <person name="Huang Y."/>
            <person name="Li Y."/>
            <person name="Zhu J."/>
            <person name="Liu Y."/>
            <person name="Hu X."/>
            <person name="Jia P."/>
            <person name="Zhang Y."/>
            <person name="Zhao Q."/>
            <person name="Ying K."/>
            <person name="Yu S."/>
            <person name="Tang Y."/>
            <person name="Weng Q."/>
            <person name="Zhang L."/>
            <person name="Lu Y."/>
            <person name="Mu J."/>
            <person name="Lu Y."/>
            <person name="Zhang L.S."/>
            <person name="Yu Z."/>
            <person name="Fan D."/>
            <person name="Liu X."/>
            <person name="Lu T."/>
            <person name="Li C."/>
            <person name="Wu Y."/>
            <person name="Sun T."/>
            <person name="Lei H."/>
            <person name="Li T."/>
            <person name="Hu H."/>
            <person name="Guan J."/>
            <person name="Wu M."/>
            <person name="Zhang R."/>
            <person name="Zhou B."/>
            <person name="Chen Z."/>
            <person name="Chen L."/>
            <person name="Jin Z."/>
            <person name="Wang R."/>
            <person name="Yin H."/>
            <person name="Cai Z."/>
            <person name="Ren S."/>
            <person name="Lv G."/>
            <person name="Gu W."/>
            <person name="Zhu G."/>
            <person name="Tu Y."/>
            <person name="Jia J."/>
            <person name="Zhang Y."/>
            <person name="Chen J."/>
            <person name="Kang H."/>
            <person name="Chen X."/>
            <person name="Shao C."/>
            <person name="Sun Y."/>
            <person name="Hu Q."/>
            <person name="Zhang X."/>
            <person name="Zhang W."/>
            <person name="Wang L."/>
            <person name="Ding C."/>
            <person name="Sheng H."/>
            <person name="Gu J."/>
            <person name="Chen S."/>
            <person name="Ni L."/>
            <person name="Zhu F."/>
            <person name="Chen W."/>
            <person name="Lan L."/>
            <person name="Lai Y."/>
            <person name="Cheng Z."/>
            <person name="Gu M."/>
            <person name="Jiang J."/>
            <person name="Li J."/>
            <person name="Hong G."/>
            <person name="Xue Y."/>
            <person name="Han B."/>
        </authorList>
    </citation>
    <scope>NUCLEOTIDE SEQUENCE [LARGE SCALE GENOMIC DNA]</scope>
    <source>
        <strain>cv. Nipponbare</strain>
    </source>
</reference>
<reference key="2">
    <citation type="journal article" date="2005" name="Nature">
        <title>The map-based sequence of the rice genome.</title>
        <authorList>
            <consortium name="International rice genome sequencing project (IRGSP)"/>
        </authorList>
    </citation>
    <scope>NUCLEOTIDE SEQUENCE [LARGE SCALE GENOMIC DNA]</scope>
    <source>
        <strain>cv. Nipponbare</strain>
    </source>
</reference>
<reference key="3">
    <citation type="journal article" date="2008" name="Nucleic Acids Res.">
        <title>The rice annotation project database (RAP-DB): 2008 update.</title>
        <authorList>
            <consortium name="The rice annotation project (RAP)"/>
        </authorList>
    </citation>
    <scope>GENOME REANNOTATION</scope>
    <source>
        <strain>cv. Nipponbare</strain>
    </source>
</reference>
<reference key="4">
    <citation type="journal article" date="2013" name="Rice">
        <title>Improvement of the Oryza sativa Nipponbare reference genome using next generation sequence and optical map data.</title>
        <authorList>
            <person name="Kawahara Y."/>
            <person name="de la Bastide M."/>
            <person name="Hamilton J.P."/>
            <person name="Kanamori H."/>
            <person name="McCombie W.R."/>
            <person name="Ouyang S."/>
            <person name="Schwartz D.C."/>
            <person name="Tanaka T."/>
            <person name="Wu J."/>
            <person name="Zhou S."/>
            <person name="Childs K.L."/>
            <person name="Davidson R.M."/>
            <person name="Lin H."/>
            <person name="Quesada-Ocampo L."/>
            <person name="Vaillancourt B."/>
            <person name="Sakai H."/>
            <person name="Lee S.S."/>
            <person name="Kim J."/>
            <person name="Numa H."/>
            <person name="Itoh T."/>
            <person name="Buell C.R."/>
            <person name="Matsumoto T."/>
        </authorList>
    </citation>
    <scope>GENOME REANNOTATION</scope>
    <source>
        <strain>cv. Nipponbare</strain>
    </source>
</reference>
<reference key="5">
    <citation type="journal article" date="2005" name="PLoS Biol.">
        <title>The genomes of Oryza sativa: a history of duplications.</title>
        <authorList>
            <person name="Yu J."/>
            <person name="Wang J."/>
            <person name="Lin W."/>
            <person name="Li S."/>
            <person name="Li H."/>
            <person name="Zhou J."/>
            <person name="Ni P."/>
            <person name="Dong W."/>
            <person name="Hu S."/>
            <person name="Zeng C."/>
            <person name="Zhang J."/>
            <person name="Zhang Y."/>
            <person name="Li R."/>
            <person name="Xu Z."/>
            <person name="Li S."/>
            <person name="Li X."/>
            <person name="Zheng H."/>
            <person name="Cong L."/>
            <person name="Lin L."/>
            <person name="Yin J."/>
            <person name="Geng J."/>
            <person name="Li G."/>
            <person name="Shi J."/>
            <person name="Liu J."/>
            <person name="Lv H."/>
            <person name="Li J."/>
            <person name="Wang J."/>
            <person name="Deng Y."/>
            <person name="Ran L."/>
            <person name="Shi X."/>
            <person name="Wang X."/>
            <person name="Wu Q."/>
            <person name="Li C."/>
            <person name="Ren X."/>
            <person name="Wang J."/>
            <person name="Wang X."/>
            <person name="Li D."/>
            <person name="Liu D."/>
            <person name="Zhang X."/>
            <person name="Ji Z."/>
            <person name="Zhao W."/>
            <person name="Sun Y."/>
            <person name="Zhang Z."/>
            <person name="Bao J."/>
            <person name="Han Y."/>
            <person name="Dong L."/>
            <person name="Ji J."/>
            <person name="Chen P."/>
            <person name="Wu S."/>
            <person name="Liu J."/>
            <person name="Xiao Y."/>
            <person name="Bu D."/>
            <person name="Tan J."/>
            <person name="Yang L."/>
            <person name="Ye C."/>
            <person name="Zhang J."/>
            <person name="Xu J."/>
            <person name="Zhou Y."/>
            <person name="Yu Y."/>
            <person name="Zhang B."/>
            <person name="Zhuang S."/>
            <person name="Wei H."/>
            <person name="Liu B."/>
            <person name="Lei M."/>
            <person name="Yu H."/>
            <person name="Li Y."/>
            <person name="Xu H."/>
            <person name="Wei S."/>
            <person name="He X."/>
            <person name="Fang L."/>
            <person name="Zhang Z."/>
            <person name="Zhang Y."/>
            <person name="Huang X."/>
            <person name="Su Z."/>
            <person name="Tong W."/>
            <person name="Li J."/>
            <person name="Tong Z."/>
            <person name="Li S."/>
            <person name="Ye J."/>
            <person name="Wang L."/>
            <person name="Fang L."/>
            <person name="Lei T."/>
            <person name="Chen C.-S."/>
            <person name="Chen H.-C."/>
            <person name="Xu Z."/>
            <person name="Li H."/>
            <person name="Huang H."/>
            <person name="Zhang F."/>
            <person name="Xu H."/>
            <person name="Li N."/>
            <person name="Zhao C."/>
            <person name="Li S."/>
            <person name="Dong L."/>
            <person name="Huang Y."/>
            <person name="Li L."/>
            <person name="Xi Y."/>
            <person name="Qi Q."/>
            <person name="Li W."/>
            <person name="Zhang B."/>
            <person name="Hu W."/>
            <person name="Zhang Y."/>
            <person name="Tian X."/>
            <person name="Jiao Y."/>
            <person name="Liang X."/>
            <person name="Jin J."/>
            <person name="Gao L."/>
            <person name="Zheng W."/>
            <person name="Hao B."/>
            <person name="Liu S.-M."/>
            <person name="Wang W."/>
            <person name="Yuan L."/>
            <person name="Cao M."/>
            <person name="McDermott J."/>
            <person name="Samudrala R."/>
            <person name="Wang J."/>
            <person name="Wong G.K.-S."/>
            <person name="Yang H."/>
        </authorList>
    </citation>
    <scope>NUCLEOTIDE SEQUENCE [LARGE SCALE GENOMIC DNA]</scope>
    <source>
        <strain>cv. Nipponbare</strain>
    </source>
</reference>
<reference key="6">
    <citation type="journal article" date="2003" name="Science">
        <title>Collection, mapping, and annotation of over 28,000 cDNA clones from japonica rice.</title>
        <authorList>
            <consortium name="The rice full-length cDNA consortium"/>
        </authorList>
    </citation>
    <scope>NUCLEOTIDE SEQUENCE [LARGE SCALE MRNA]</scope>
    <source>
        <strain>cv. Nipponbare</strain>
    </source>
</reference>
<reference key="7">
    <citation type="journal article" date="2008" name="BMC Genomics">
        <title>Genome-wide and expression analysis of protein phosphatase 2C in rice and Arabidopsis.</title>
        <authorList>
            <person name="Xue T."/>
            <person name="Wang D."/>
            <person name="Zhang S."/>
            <person name="Ehlting J."/>
            <person name="Ni F."/>
            <person name="Jacab S."/>
            <person name="Zheng C."/>
            <person name="Zhong Y."/>
        </authorList>
    </citation>
    <scope>GENE FAMILY</scope>
    <scope>NOMENCLATURE</scope>
</reference>